<proteinExistence type="inferred from homology"/>
<evidence type="ECO:0000255" key="1">
    <source>
        <dbReference type="HAMAP-Rule" id="MF_00022"/>
    </source>
</evidence>
<evidence type="ECO:0000305" key="2"/>
<comment type="function">
    <text evidence="1">Catalyzes the attachment of glutamate to tRNA(Glu) in a two-step reaction: glutamate is first activated by ATP to form Glu-AMP and then transferred to the acceptor end of tRNA(Glu).</text>
</comment>
<comment type="catalytic activity">
    <reaction evidence="1">
        <text>tRNA(Glu) + L-glutamate + ATP = L-glutamyl-tRNA(Glu) + AMP + diphosphate</text>
        <dbReference type="Rhea" id="RHEA:23540"/>
        <dbReference type="Rhea" id="RHEA-COMP:9663"/>
        <dbReference type="Rhea" id="RHEA-COMP:9680"/>
        <dbReference type="ChEBI" id="CHEBI:29985"/>
        <dbReference type="ChEBI" id="CHEBI:30616"/>
        <dbReference type="ChEBI" id="CHEBI:33019"/>
        <dbReference type="ChEBI" id="CHEBI:78442"/>
        <dbReference type="ChEBI" id="CHEBI:78520"/>
        <dbReference type="ChEBI" id="CHEBI:456215"/>
        <dbReference type="EC" id="6.1.1.17"/>
    </reaction>
</comment>
<comment type="subunit">
    <text evidence="1">Monomer.</text>
</comment>
<comment type="subcellular location">
    <subcellularLocation>
        <location evidence="1">Cytoplasm</location>
    </subcellularLocation>
</comment>
<comment type="similarity">
    <text evidence="1">Belongs to the class-I aminoacyl-tRNA synthetase family. Glutamate--tRNA ligase type 1 subfamily.</text>
</comment>
<comment type="sequence caution" evidence="2">
    <conflict type="erroneous initiation">
        <sequence resource="EMBL-CDS" id="AAL95536"/>
    </conflict>
</comment>
<gene>
    <name evidence="1" type="primary">gltX</name>
    <name type="ordered locus">FN1340</name>
</gene>
<feature type="chain" id="PRO_0000119565" description="Glutamate--tRNA ligase">
    <location>
        <begin position="1"/>
        <end position="510"/>
    </location>
</feature>
<feature type="short sequence motif" description="'HIGH' region" evidence="1">
    <location>
        <begin position="15"/>
        <end position="25"/>
    </location>
</feature>
<feature type="short sequence motif" description="'KMSKS' region" evidence="1">
    <location>
        <begin position="256"/>
        <end position="260"/>
    </location>
</feature>
<feature type="binding site" evidence="1">
    <location>
        <position position="259"/>
    </location>
    <ligand>
        <name>ATP</name>
        <dbReference type="ChEBI" id="CHEBI:30616"/>
    </ligand>
</feature>
<name>SYE_FUSNN</name>
<keyword id="KW-0030">Aminoacyl-tRNA synthetase</keyword>
<keyword id="KW-0067">ATP-binding</keyword>
<keyword id="KW-0963">Cytoplasm</keyword>
<keyword id="KW-0436">Ligase</keyword>
<keyword id="KW-0547">Nucleotide-binding</keyword>
<keyword id="KW-0648">Protein biosynthesis</keyword>
<keyword id="KW-1185">Reference proteome</keyword>
<sequence>MCVDCKKRVRTRVAPSPTGDPHVGTAYIALFNIAFAHVNDGDFILRIEDTDRNRYTEGSEQMIFDALKWLDLDYSEGPDVGGDYGPYRQSERFDLYGKYAKELVEKGGAYYCFCDHERLENLRERQKAMGLPPGYDGHCRSLSKEEIEEKLKAGVPYVIRLKMPYEGETVIHDRLRGDVVFENSKIDDQVLLKADGYPTYHLANIVDDHLMGITHVIRAEEWIPSTPKHIQLYKAFGWEAPEFIHMPLLRNDDRSKISKRKNPVSLIWYKEEGYLKEGLVNFLGLMGYSYGDGQEIFTLQEFKDNFNIDKVTLGGPVFDLVKLGWVNNQHMKMKDLGELTRLTIPFFVNEGYLTNENVSEKEFETLKKVVGIEREGAKTLQELAKNSKFFFVDEFSLPELREDMDKKERKSVERLLNSLKDEIGLKSIKLFIEKLEKWNGNEFTAEQAKDLLHSLLDDLQEGPGKIFMPIRAVLTGESKGADLYNILYVIGKERALKRIKNIVKKYNIGI</sequence>
<accession>Q8RDZ8</accession>
<reference key="1">
    <citation type="journal article" date="2002" name="J. Bacteriol.">
        <title>Genome sequence and analysis of the oral bacterium Fusobacterium nucleatum strain ATCC 25586.</title>
        <authorList>
            <person name="Kapatral V."/>
            <person name="Anderson I."/>
            <person name="Ivanova N."/>
            <person name="Reznik G."/>
            <person name="Los T."/>
            <person name="Lykidis A."/>
            <person name="Bhattacharyya A."/>
            <person name="Bartman A."/>
            <person name="Gardner W."/>
            <person name="Grechkin G."/>
            <person name="Zhu L."/>
            <person name="Vasieva O."/>
            <person name="Chu L."/>
            <person name="Kogan Y."/>
            <person name="Chaga O."/>
            <person name="Goltsman E."/>
            <person name="Bernal A."/>
            <person name="Larsen N."/>
            <person name="D'Souza M."/>
            <person name="Walunas T."/>
            <person name="Pusch G."/>
            <person name="Haselkorn R."/>
            <person name="Fonstein M."/>
            <person name="Kyrpides N.C."/>
            <person name="Overbeek R."/>
        </authorList>
    </citation>
    <scope>NUCLEOTIDE SEQUENCE [LARGE SCALE GENOMIC DNA]</scope>
    <source>
        <strain>ATCC 25586 / DSM 15643 / BCRC 10681 / CIP 101130 / JCM 8532 / KCTC 2640 / LMG 13131 / VPI 4355</strain>
    </source>
</reference>
<dbReference type="EC" id="6.1.1.17" evidence="1"/>
<dbReference type="EMBL" id="AE009951">
    <property type="protein sequence ID" value="AAL95536.1"/>
    <property type="status" value="ALT_INIT"/>
    <property type="molecule type" value="Genomic_DNA"/>
</dbReference>
<dbReference type="RefSeq" id="NP_604237.1">
    <property type="nucleotide sequence ID" value="NC_003454.1"/>
</dbReference>
<dbReference type="RefSeq" id="WP_147373220.1">
    <property type="nucleotide sequence ID" value="NZ_CP028101.1"/>
</dbReference>
<dbReference type="SMR" id="Q8RDZ8"/>
<dbReference type="FunCoup" id="Q8RDZ8">
    <property type="interactions" value="388"/>
</dbReference>
<dbReference type="STRING" id="190304.FN1340"/>
<dbReference type="PaxDb" id="190304-FN1340"/>
<dbReference type="EnsemblBacteria" id="AAL95536">
    <property type="protein sequence ID" value="AAL95536"/>
    <property type="gene ID" value="FN1340"/>
</dbReference>
<dbReference type="GeneID" id="79784314"/>
<dbReference type="KEGG" id="fnu:FN1340"/>
<dbReference type="PATRIC" id="fig|190304.8.peg.1903"/>
<dbReference type="eggNOG" id="COG0008">
    <property type="taxonomic scope" value="Bacteria"/>
</dbReference>
<dbReference type="HOGENOM" id="CLU_015768_6_3_0"/>
<dbReference type="InParanoid" id="Q8RDZ8"/>
<dbReference type="Proteomes" id="UP000002521">
    <property type="component" value="Chromosome"/>
</dbReference>
<dbReference type="GO" id="GO:0005829">
    <property type="term" value="C:cytosol"/>
    <property type="evidence" value="ECO:0000318"/>
    <property type="project" value="GO_Central"/>
</dbReference>
<dbReference type="GO" id="GO:0005524">
    <property type="term" value="F:ATP binding"/>
    <property type="evidence" value="ECO:0007669"/>
    <property type="project" value="UniProtKB-UniRule"/>
</dbReference>
<dbReference type="GO" id="GO:0004818">
    <property type="term" value="F:glutamate-tRNA ligase activity"/>
    <property type="evidence" value="ECO:0000318"/>
    <property type="project" value="GO_Central"/>
</dbReference>
<dbReference type="GO" id="GO:0000049">
    <property type="term" value="F:tRNA binding"/>
    <property type="evidence" value="ECO:0007669"/>
    <property type="project" value="InterPro"/>
</dbReference>
<dbReference type="GO" id="GO:0008270">
    <property type="term" value="F:zinc ion binding"/>
    <property type="evidence" value="ECO:0007669"/>
    <property type="project" value="InterPro"/>
</dbReference>
<dbReference type="GO" id="GO:0006424">
    <property type="term" value="P:glutamyl-tRNA aminoacylation"/>
    <property type="evidence" value="ECO:0000318"/>
    <property type="project" value="GO_Central"/>
</dbReference>
<dbReference type="CDD" id="cd00808">
    <property type="entry name" value="GluRS_core"/>
    <property type="match status" value="1"/>
</dbReference>
<dbReference type="FunFam" id="1.10.10.350:FF:000031">
    <property type="match status" value="1"/>
</dbReference>
<dbReference type="FunFam" id="3.40.50.620:FF:000045">
    <property type="entry name" value="Glutamate--tRNA ligase, mitochondrial"/>
    <property type="match status" value="1"/>
</dbReference>
<dbReference type="Gene3D" id="1.10.10.350">
    <property type="match status" value="1"/>
</dbReference>
<dbReference type="Gene3D" id="3.40.50.620">
    <property type="entry name" value="HUPs"/>
    <property type="match status" value="1"/>
</dbReference>
<dbReference type="HAMAP" id="MF_00022">
    <property type="entry name" value="Glu_tRNA_synth_type1"/>
    <property type="match status" value="1"/>
</dbReference>
<dbReference type="InterPro" id="IPR045462">
    <property type="entry name" value="aa-tRNA-synth_I_cd-bd"/>
</dbReference>
<dbReference type="InterPro" id="IPR020751">
    <property type="entry name" value="aa-tRNA-synth_I_codon-bd_sub2"/>
</dbReference>
<dbReference type="InterPro" id="IPR001412">
    <property type="entry name" value="aa-tRNA-synth_I_CS"/>
</dbReference>
<dbReference type="InterPro" id="IPR008925">
    <property type="entry name" value="aa_tRNA-synth_I_cd-bd_sf"/>
</dbReference>
<dbReference type="InterPro" id="IPR004527">
    <property type="entry name" value="Glu-tRNA-ligase_bac/mito"/>
</dbReference>
<dbReference type="InterPro" id="IPR000924">
    <property type="entry name" value="Glu/Gln-tRNA-synth"/>
</dbReference>
<dbReference type="InterPro" id="IPR020058">
    <property type="entry name" value="Glu/Gln-tRNA-synth_Ib_cat-dom"/>
</dbReference>
<dbReference type="InterPro" id="IPR049940">
    <property type="entry name" value="GluQ/Sye"/>
</dbReference>
<dbReference type="InterPro" id="IPR033910">
    <property type="entry name" value="GluRS_core"/>
</dbReference>
<dbReference type="InterPro" id="IPR014729">
    <property type="entry name" value="Rossmann-like_a/b/a_fold"/>
</dbReference>
<dbReference type="NCBIfam" id="TIGR00464">
    <property type="entry name" value="gltX_bact"/>
    <property type="match status" value="1"/>
</dbReference>
<dbReference type="PANTHER" id="PTHR43311">
    <property type="entry name" value="GLUTAMATE--TRNA LIGASE"/>
    <property type="match status" value="1"/>
</dbReference>
<dbReference type="PANTHER" id="PTHR43311:SF2">
    <property type="entry name" value="GLUTAMATE--TRNA LIGASE, MITOCHONDRIAL-RELATED"/>
    <property type="match status" value="1"/>
</dbReference>
<dbReference type="Pfam" id="PF19269">
    <property type="entry name" value="Anticodon_2"/>
    <property type="match status" value="1"/>
</dbReference>
<dbReference type="Pfam" id="PF00749">
    <property type="entry name" value="tRNA-synt_1c"/>
    <property type="match status" value="1"/>
</dbReference>
<dbReference type="PRINTS" id="PR00987">
    <property type="entry name" value="TRNASYNTHGLU"/>
</dbReference>
<dbReference type="SUPFAM" id="SSF48163">
    <property type="entry name" value="An anticodon-binding domain of class I aminoacyl-tRNA synthetases"/>
    <property type="match status" value="1"/>
</dbReference>
<dbReference type="SUPFAM" id="SSF52374">
    <property type="entry name" value="Nucleotidylyl transferase"/>
    <property type="match status" value="1"/>
</dbReference>
<dbReference type="PROSITE" id="PS00178">
    <property type="entry name" value="AA_TRNA_LIGASE_I"/>
    <property type="match status" value="1"/>
</dbReference>
<protein>
    <recommendedName>
        <fullName evidence="1">Glutamate--tRNA ligase</fullName>
        <ecNumber evidence="1">6.1.1.17</ecNumber>
    </recommendedName>
    <alternativeName>
        <fullName evidence="1">Glutamyl-tRNA synthetase</fullName>
        <shortName evidence="1">GluRS</shortName>
    </alternativeName>
</protein>
<organism>
    <name type="scientific">Fusobacterium nucleatum subsp. nucleatum (strain ATCC 25586 / DSM 15643 / BCRC 10681 / CIP 101130 / JCM 8532 / KCTC 2640 / LMG 13131 / VPI 4355)</name>
    <dbReference type="NCBI Taxonomy" id="190304"/>
    <lineage>
        <taxon>Bacteria</taxon>
        <taxon>Fusobacteriati</taxon>
        <taxon>Fusobacteriota</taxon>
        <taxon>Fusobacteriia</taxon>
        <taxon>Fusobacteriales</taxon>
        <taxon>Fusobacteriaceae</taxon>
        <taxon>Fusobacterium</taxon>
    </lineage>
</organism>